<sequence length="281" mass="32056">MSSYQNHKALAELTLGKPTAYCDHYDATLLQAVPRSMNREPLGLYPDNLPFHGADIWTLYELSWLNSNGLPQVAVGEISLNADSINLIESKSFKLYLNSFNQTIFADKESVRMTLQRDLAACAQGNVSVALYDLDEITGQPISNFNGECLDKQDIRIDSYEFNADYLQGAAGKDHVEESLVSHLLKSNCLITHQPDWGSVQIHYRGPQIDHEALLRYLVSFRHHNEFHEQCVERIFNDIMRFCQPETLTVYARYTRRGGLDINPWRSNTDFVPLTGRLARQ</sequence>
<organism>
    <name type="scientific">Yersinia pseudotuberculosis serotype IB (strain PB1/+)</name>
    <dbReference type="NCBI Taxonomy" id="502801"/>
    <lineage>
        <taxon>Bacteria</taxon>
        <taxon>Pseudomonadati</taxon>
        <taxon>Pseudomonadota</taxon>
        <taxon>Gammaproteobacteria</taxon>
        <taxon>Enterobacterales</taxon>
        <taxon>Yersiniaceae</taxon>
        <taxon>Yersinia</taxon>
    </lineage>
</organism>
<dbReference type="EC" id="1.7.1.13" evidence="1"/>
<dbReference type="EMBL" id="CP001048">
    <property type="protein sequence ID" value="ACC90088.1"/>
    <property type="molecule type" value="Genomic_DNA"/>
</dbReference>
<dbReference type="RefSeq" id="WP_011192866.1">
    <property type="nucleotide sequence ID" value="NZ_CP009780.1"/>
</dbReference>
<dbReference type="SMR" id="B2JZ44"/>
<dbReference type="KEGG" id="ypb:YPTS_3133"/>
<dbReference type="PATRIC" id="fig|502801.10.peg.2565"/>
<dbReference type="UniPathway" id="UPA00392"/>
<dbReference type="GO" id="GO:0005737">
    <property type="term" value="C:cytoplasm"/>
    <property type="evidence" value="ECO:0007669"/>
    <property type="project" value="UniProtKB-SubCell"/>
</dbReference>
<dbReference type="GO" id="GO:0033739">
    <property type="term" value="F:preQ1 synthase activity"/>
    <property type="evidence" value="ECO:0007669"/>
    <property type="project" value="UniProtKB-UniRule"/>
</dbReference>
<dbReference type="GO" id="GO:0008616">
    <property type="term" value="P:queuosine biosynthetic process"/>
    <property type="evidence" value="ECO:0007669"/>
    <property type="project" value="UniProtKB-UniRule"/>
</dbReference>
<dbReference type="GO" id="GO:0006400">
    <property type="term" value="P:tRNA modification"/>
    <property type="evidence" value="ECO:0007669"/>
    <property type="project" value="UniProtKB-UniRule"/>
</dbReference>
<dbReference type="Gene3D" id="3.30.1130.10">
    <property type="match status" value="2"/>
</dbReference>
<dbReference type="HAMAP" id="MF_00817">
    <property type="entry name" value="QueF_type2"/>
    <property type="match status" value="1"/>
</dbReference>
<dbReference type="InterPro" id="IPR043133">
    <property type="entry name" value="GTP-CH-I_C/QueF"/>
</dbReference>
<dbReference type="InterPro" id="IPR050084">
    <property type="entry name" value="NADPH_dep_7-cyano-7-deazaG_red"/>
</dbReference>
<dbReference type="InterPro" id="IPR029500">
    <property type="entry name" value="QueF"/>
</dbReference>
<dbReference type="InterPro" id="IPR029139">
    <property type="entry name" value="QueF_N"/>
</dbReference>
<dbReference type="InterPro" id="IPR016428">
    <property type="entry name" value="QueF_type2"/>
</dbReference>
<dbReference type="NCBIfam" id="TIGR03138">
    <property type="entry name" value="QueF"/>
    <property type="match status" value="1"/>
</dbReference>
<dbReference type="PANTHER" id="PTHR34354">
    <property type="entry name" value="NADPH-DEPENDENT 7-CYANO-7-DEAZAGUANINE REDUCTASE"/>
    <property type="match status" value="1"/>
</dbReference>
<dbReference type="PANTHER" id="PTHR34354:SF1">
    <property type="entry name" value="NADPH-DEPENDENT 7-CYANO-7-DEAZAGUANINE REDUCTASE"/>
    <property type="match status" value="1"/>
</dbReference>
<dbReference type="Pfam" id="PF14489">
    <property type="entry name" value="QueF"/>
    <property type="match status" value="1"/>
</dbReference>
<dbReference type="Pfam" id="PF14819">
    <property type="entry name" value="QueF_N"/>
    <property type="match status" value="1"/>
</dbReference>
<dbReference type="PIRSF" id="PIRSF004750">
    <property type="entry name" value="Nitrile_oxidored_YqcD_prd"/>
    <property type="match status" value="1"/>
</dbReference>
<dbReference type="SUPFAM" id="SSF55620">
    <property type="entry name" value="Tetrahydrobiopterin biosynthesis enzymes-like"/>
    <property type="match status" value="1"/>
</dbReference>
<evidence type="ECO:0000255" key="1">
    <source>
        <dbReference type="HAMAP-Rule" id="MF_00817"/>
    </source>
</evidence>
<proteinExistence type="inferred from homology"/>
<protein>
    <recommendedName>
        <fullName evidence="1">NADPH-dependent 7-cyano-7-deazaguanine reductase</fullName>
        <ecNumber evidence="1">1.7.1.13</ecNumber>
    </recommendedName>
    <alternativeName>
        <fullName evidence="1">7-cyano-7-carbaguanine reductase</fullName>
    </alternativeName>
    <alternativeName>
        <fullName evidence="1">NADPH-dependent nitrile oxidoreductase</fullName>
    </alternativeName>
    <alternativeName>
        <fullName evidence="1">PreQ(0) reductase</fullName>
    </alternativeName>
</protein>
<accession>B2JZ44</accession>
<reference key="1">
    <citation type="submission" date="2008-04" db="EMBL/GenBank/DDBJ databases">
        <title>Complete sequence of Yersinia pseudotuberculosis PB1/+.</title>
        <authorList>
            <person name="Copeland A."/>
            <person name="Lucas S."/>
            <person name="Lapidus A."/>
            <person name="Glavina del Rio T."/>
            <person name="Dalin E."/>
            <person name="Tice H."/>
            <person name="Bruce D."/>
            <person name="Goodwin L."/>
            <person name="Pitluck S."/>
            <person name="Munk A.C."/>
            <person name="Brettin T."/>
            <person name="Detter J.C."/>
            <person name="Han C."/>
            <person name="Tapia R."/>
            <person name="Schmutz J."/>
            <person name="Larimer F."/>
            <person name="Land M."/>
            <person name="Hauser L."/>
            <person name="Challacombe J.F."/>
            <person name="Green L."/>
            <person name="Lindler L.E."/>
            <person name="Nikolich M.P."/>
            <person name="Richardson P."/>
        </authorList>
    </citation>
    <scope>NUCLEOTIDE SEQUENCE [LARGE SCALE GENOMIC DNA]</scope>
    <source>
        <strain>PB1/+</strain>
    </source>
</reference>
<name>QUEF_YERPB</name>
<comment type="function">
    <text evidence="1">Catalyzes the NADPH-dependent reduction of 7-cyano-7-deazaguanine (preQ0) to 7-aminomethyl-7-deazaguanine (preQ1).</text>
</comment>
<comment type="catalytic activity">
    <reaction evidence="1">
        <text>7-aminomethyl-7-carbaguanine + 2 NADP(+) = 7-cyano-7-deazaguanine + 2 NADPH + 3 H(+)</text>
        <dbReference type="Rhea" id="RHEA:13409"/>
        <dbReference type="ChEBI" id="CHEBI:15378"/>
        <dbReference type="ChEBI" id="CHEBI:45075"/>
        <dbReference type="ChEBI" id="CHEBI:57783"/>
        <dbReference type="ChEBI" id="CHEBI:58349"/>
        <dbReference type="ChEBI" id="CHEBI:58703"/>
        <dbReference type="EC" id="1.7.1.13"/>
    </reaction>
</comment>
<comment type="pathway">
    <text evidence="1">tRNA modification; tRNA-queuosine biosynthesis.</text>
</comment>
<comment type="subunit">
    <text evidence="1">Homodimer.</text>
</comment>
<comment type="subcellular location">
    <subcellularLocation>
        <location evidence="1">Cytoplasm</location>
    </subcellularLocation>
</comment>
<comment type="similarity">
    <text evidence="1">Belongs to the GTP cyclohydrolase I family. QueF type 2 subfamily.</text>
</comment>
<gene>
    <name evidence="1" type="primary">queF</name>
    <name type="ordered locus">YPTS_3133</name>
</gene>
<keyword id="KW-0963">Cytoplasm</keyword>
<keyword id="KW-0521">NADP</keyword>
<keyword id="KW-0560">Oxidoreductase</keyword>
<keyword id="KW-0671">Queuosine biosynthesis</keyword>
<feature type="chain" id="PRO_1000213087" description="NADPH-dependent 7-cyano-7-deazaguanine reductase">
    <location>
        <begin position="1"/>
        <end position="281"/>
    </location>
</feature>
<feature type="active site" description="Thioimide intermediate" evidence="1">
    <location>
        <position position="189"/>
    </location>
</feature>
<feature type="active site" description="Proton donor" evidence="1">
    <location>
        <position position="196"/>
    </location>
</feature>
<feature type="binding site" evidence="1">
    <location>
        <begin position="88"/>
        <end position="90"/>
    </location>
    <ligand>
        <name>substrate</name>
    </ligand>
</feature>
<feature type="binding site" evidence="1">
    <location>
        <begin position="90"/>
        <end position="91"/>
    </location>
    <ligand>
        <name>NADPH</name>
        <dbReference type="ChEBI" id="CHEBI:57783"/>
    </ligand>
</feature>
<feature type="binding site" evidence="1">
    <location>
        <begin position="228"/>
        <end position="229"/>
    </location>
    <ligand>
        <name>substrate</name>
    </ligand>
</feature>
<feature type="binding site" evidence="1">
    <location>
        <begin position="257"/>
        <end position="258"/>
    </location>
    <ligand>
        <name>NADPH</name>
        <dbReference type="ChEBI" id="CHEBI:57783"/>
    </ligand>
</feature>